<proteinExistence type="inferred from homology"/>
<keyword id="KW-0004">4Fe-4S</keyword>
<keyword id="KW-0997">Cell inner membrane</keyword>
<keyword id="KW-1003">Cell membrane</keyword>
<keyword id="KW-0249">Electron transport</keyword>
<keyword id="KW-0408">Iron</keyword>
<keyword id="KW-0411">Iron-sulfur</keyword>
<keyword id="KW-0472">Membrane</keyword>
<keyword id="KW-0479">Metal-binding</keyword>
<keyword id="KW-0677">Repeat</keyword>
<keyword id="KW-1278">Translocase</keyword>
<keyword id="KW-0813">Transport</keyword>
<protein>
    <recommendedName>
        <fullName evidence="1">Ion-translocating oxidoreductase complex subunit B</fullName>
        <ecNumber evidence="1">7.-.-.-</ecNumber>
    </recommendedName>
    <alternativeName>
        <fullName evidence="1">Rnf electron transport complex subunit B</fullName>
    </alternativeName>
</protein>
<accession>Q2NSZ6</accession>
<sequence>MLTFWLAVATLSALALVAGAVLGFAARRFQVKTDPVAERIDALLPQSQCAQCGYPGCRPYAEAVAGGAPINKCVPGGEAVMLKIAAQLSVDPQPMDGEASSRPESRVAWIDEGNCIGCTKCIQACPVDAIVGATRAVHTVVSDLCTGCDLCVAPCPTNCIEMRPLAITPTSWKWDLRTIPITVIQQEQHV</sequence>
<name>RNFB_SODGM</name>
<feature type="chain" id="PRO_1000013662" description="Ion-translocating oxidoreductase complex subunit B">
    <location>
        <begin position="1"/>
        <end position="190"/>
    </location>
</feature>
<feature type="domain" description="4Fe-4S" evidence="1">
    <location>
        <begin position="32"/>
        <end position="90"/>
    </location>
</feature>
<feature type="domain" description="4Fe-4S ferredoxin-type 1" evidence="1">
    <location>
        <begin position="106"/>
        <end position="135"/>
    </location>
</feature>
<feature type="domain" description="4Fe-4S ferredoxin-type 2" evidence="1">
    <location>
        <begin position="136"/>
        <end position="165"/>
    </location>
</feature>
<feature type="region of interest" description="Hydrophobic" evidence="1">
    <location>
        <begin position="1"/>
        <end position="26"/>
    </location>
</feature>
<feature type="binding site" evidence="1">
    <location>
        <position position="49"/>
    </location>
    <ligand>
        <name>[4Fe-4S] cluster</name>
        <dbReference type="ChEBI" id="CHEBI:49883"/>
        <label>1</label>
    </ligand>
</feature>
<feature type="binding site" evidence="1">
    <location>
        <position position="52"/>
    </location>
    <ligand>
        <name>[4Fe-4S] cluster</name>
        <dbReference type="ChEBI" id="CHEBI:49883"/>
        <label>1</label>
    </ligand>
</feature>
<feature type="binding site" evidence="1">
    <location>
        <position position="57"/>
    </location>
    <ligand>
        <name>[4Fe-4S] cluster</name>
        <dbReference type="ChEBI" id="CHEBI:49883"/>
        <label>1</label>
    </ligand>
</feature>
<feature type="binding site" evidence="1">
    <location>
        <position position="73"/>
    </location>
    <ligand>
        <name>[4Fe-4S] cluster</name>
        <dbReference type="ChEBI" id="CHEBI:49883"/>
        <label>1</label>
    </ligand>
</feature>
<feature type="binding site" evidence="1">
    <location>
        <position position="115"/>
    </location>
    <ligand>
        <name>[4Fe-4S] cluster</name>
        <dbReference type="ChEBI" id="CHEBI:49883"/>
        <label>2</label>
    </ligand>
</feature>
<feature type="binding site" evidence="1">
    <location>
        <position position="118"/>
    </location>
    <ligand>
        <name>[4Fe-4S] cluster</name>
        <dbReference type="ChEBI" id="CHEBI:49883"/>
        <label>2</label>
    </ligand>
</feature>
<feature type="binding site" evidence="1">
    <location>
        <position position="121"/>
    </location>
    <ligand>
        <name>[4Fe-4S] cluster</name>
        <dbReference type="ChEBI" id="CHEBI:49883"/>
        <label>2</label>
    </ligand>
</feature>
<feature type="binding site" evidence="1">
    <location>
        <position position="125"/>
    </location>
    <ligand>
        <name>[4Fe-4S] cluster</name>
        <dbReference type="ChEBI" id="CHEBI:49883"/>
        <label>3</label>
    </ligand>
</feature>
<feature type="binding site" evidence="1">
    <location>
        <position position="145"/>
    </location>
    <ligand>
        <name>[4Fe-4S] cluster</name>
        <dbReference type="ChEBI" id="CHEBI:49883"/>
        <label>3</label>
    </ligand>
</feature>
<feature type="binding site" evidence="1">
    <location>
        <position position="148"/>
    </location>
    <ligand>
        <name>[4Fe-4S] cluster</name>
        <dbReference type="ChEBI" id="CHEBI:49883"/>
        <label>3</label>
    </ligand>
</feature>
<feature type="binding site" evidence="1">
    <location>
        <position position="151"/>
    </location>
    <ligand>
        <name>[4Fe-4S] cluster</name>
        <dbReference type="ChEBI" id="CHEBI:49883"/>
        <label>3</label>
    </ligand>
</feature>
<feature type="binding site" evidence="1">
    <location>
        <position position="155"/>
    </location>
    <ligand>
        <name>[4Fe-4S] cluster</name>
        <dbReference type="ChEBI" id="CHEBI:49883"/>
        <label>2</label>
    </ligand>
</feature>
<organism>
    <name type="scientific">Sodalis glossinidius (strain morsitans)</name>
    <dbReference type="NCBI Taxonomy" id="343509"/>
    <lineage>
        <taxon>Bacteria</taxon>
        <taxon>Pseudomonadati</taxon>
        <taxon>Pseudomonadota</taxon>
        <taxon>Gammaproteobacteria</taxon>
        <taxon>Enterobacterales</taxon>
        <taxon>Bruguierivoracaceae</taxon>
        <taxon>Sodalis</taxon>
    </lineage>
</organism>
<evidence type="ECO:0000255" key="1">
    <source>
        <dbReference type="HAMAP-Rule" id="MF_00463"/>
    </source>
</evidence>
<comment type="function">
    <text evidence="1">Part of a membrane-bound complex that couples electron transfer with translocation of ions across the membrane.</text>
</comment>
<comment type="cofactor">
    <cofactor evidence="1">
        <name>[4Fe-4S] cluster</name>
        <dbReference type="ChEBI" id="CHEBI:49883"/>
    </cofactor>
    <text evidence="1">Binds 3 [4Fe-4S] clusters.</text>
</comment>
<comment type="subunit">
    <text evidence="1">The complex is composed of six subunits: RnfA, RnfB, RnfC, RnfD, RnfE and RnfG.</text>
</comment>
<comment type="subcellular location">
    <subcellularLocation>
        <location evidence="1">Cell inner membrane</location>
    </subcellularLocation>
</comment>
<comment type="similarity">
    <text evidence="1">Belongs to the 4Fe4S bacterial-type ferredoxin family. RnfB subfamily.</text>
</comment>
<gene>
    <name evidence="1" type="primary">rnfB</name>
    <name type="ordered locus">SG1454</name>
</gene>
<reference key="1">
    <citation type="journal article" date="2006" name="Genome Res.">
        <title>Massive genome erosion and functional adaptations provide insights into the symbiotic lifestyle of Sodalis glossinidius in the tsetse host.</title>
        <authorList>
            <person name="Toh H."/>
            <person name="Weiss B.L."/>
            <person name="Perkin S.A.H."/>
            <person name="Yamashita A."/>
            <person name="Oshima K."/>
            <person name="Hattori M."/>
            <person name="Aksoy S."/>
        </authorList>
    </citation>
    <scope>NUCLEOTIDE SEQUENCE [LARGE SCALE GENOMIC DNA]</scope>
    <source>
        <strain>morsitans</strain>
    </source>
</reference>
<dbReference type="EC" id="7.-.-.-" evidence="1"/>
<dbReference type="EMBL" id="AP008232">
    <property type="protein sequence ID" value="BAE74729.1"/>
    <property type="molecule type" value="Genomic_DNA"/>
</dbReference>
<dbReference type="RefSeq" id="WP_011411274.1">
    <property type="nucleotide sequence ID" value="NC_007712.1"/>
</dbReference>
<dbReference type="STRING" id="343509.SG1454"/>
<dbReference type="KEGG" id="sgl:SG1454"/>
<dbReference type="eggNOG" id="COG2878">
    <property type="taxonomic scope" value="Bacteria"/>
</dbReference>
<dbReference type="HOGENOM" id="CLU_063448_2_0_6"/>
<dbReference type="OrthoDB" id="9789936at2"/>
<dbReference type="BioCyc" id="SGLO343509:SGP1_RS12870-MONOMER"/>
<dbReference type="Proteomes" id="UP000001932">
    <property type="component" value="Chromosome"/>
</dbReference>
<dbReference type="GO" id="GO:0005886">
    <property type="term" value="C:plasma membrane"/>
    <property type="evidence" value="ECO:0007669"/>
    <property type="project" value="UniProtKB-SubCell"/>
</dbReference>
<dbReference type="GO" id="GO:0051539">
    <property type="term" value="F:4 iron, 4 sulfur cluster binding"/>
    <property type="evidence" value="ECO:0007669"/>
    <property type="project" value="UniProtKB-UniRule"/>
</dbReference>
<dbReference type="GO" id="GO:0009055">
    <property type="term" value="F:electron transfer activity"/>
    <property type="evidence" value="ECO:0007669"/>
    <property type="project" value="InterPro"/>
</dbReference>
<dbReference type="GO" id="GO:0046872">
    <property type="term" value="F:metal ion binding"/>
    <property type="evidence" value="ECO:0007669"/>
    <property type="project" value="UniProtKB-KW"/>
</dbReference>
<dbReference type="GO" id="GO:0022900">
    <property type="term" value="P:electron transport chain"/>
    <property type="evidence" value="ECO:0007669"/>
    <property type="project" value="UniProtKB-UniRule"/>
</dbReference>
<dbReference type="Gene3D" id="3.30.70.20">
    <property type="match status" value="1"/>
</dbReference>
<dbReference type="Gene3D" id="1.10.15.40">
    <property type="entry name" value="Electron transport complex subunit B, putative Fe-S cluster"/>
    <property type="match status" value="1"/>
</dbReference>
<dbReference type="HAMAP" id="MF_00463">
    <property type="entry name" value="RsxB_RnfB"/>
    <property type="match status" value="1"/>
</dbReference>
<dbReference type="InterPro" id="IPR007202">
    <property type="entry name" value="4Fe-4S_dom"/>
</dbReference>
<dbReference type="InterPro" id="IPR017896">
    <property type="entry name" value="4Fe4S_Fe-S-bd"/>
</dbReference>
<dbReference type="InterPro" id="IPR017900">
    <property type="entry name" value="4Fe4S_Fe_S_CS"/>
</dbReference>
<dbReference type="InterPro" id="IPR010207">
    <property type="entry name" value="Elect_transpt_cplx_RnfB/RsxB"/>
</dbReference>
<dbReference type="InterPro" id="IPR016463">
    <property type="entry name" value="RnfB/RsxB_Proteobac"/>
</dbReference>
<dbReference type="InterPro" id="IPR050294">
    <property type="entry name" value="RnfB_subfamily"/>
</dbReference>
<dbReference type="NCBIfam" id="NF003475">
    <property type="entry name" value="PRK05113.1"/>
    <property type="match status" value="1"/>
</dbReference>
<dbReference type="NCBIfam" id="TIGR01944">
    <property type="entry name" value="rnfB"/>
    <property type="match status" value="1"/>
</dbReference>
<dbReference type="PANTHER" id="PTHR42859:SF3">
    <property type="entry name" value="ION-TRANSLOCATING OXIDOREDUCTASE COMPLEX SUBUNIT B"/>
    <property type="match status" value="1"/>
</dbReference>
<dbReference type="PANTHER" id="PTHR42859">
    <property type="entry name" value="OXIDOREDUCTASE"/>
    <property type="match status" value="1"/>
</dbReference>
<dbReference type="Pfam" id="PF14697">
    <property type="entry name" value="Fer4_21"/>
    <property type="match status" value="1"/>
</dbReference>
<dbReference type="Pfam" id="PF04060">
    <property type="entry name" value="FeS"/>
    <property type="match status" value="1"/>
</dbReference>
<dbReference type="PIRSF" id="PIRSF005784">
    <property type="entry name" value="Elect_transpt_RnfB"/>
    <property type="match status" value="1"/>
</dbReference>
<dbReference type="SUPFAM" id="SSF54862">
    <property type="entry name" value="4Fe-4S ferredoxins"/>
    <property type="match status" value="1"/>
</dbReference>
<dbReference type="PROSITE" id="PS51656">
    <property type="entry name" value="4FE4S"/>
    <property type="match status" value="1"/>
</dbReference>
<dbReference type="PROSITE" id="PS00198">
    <property type="entry name" value="4FE4S_FER_1"/>
    <property type="match status" value="2"/>
</dbReference>
<dbReference type="PROSITE" id="PS51379">
    <property type="entry name" value="4FE4S_FER_2"/>
    <property type="match status" value="2"/>
</dbReference>